<gene>
    <name evidence="5" type="primary">cldn7a</name>
    <name type="ORF">zgc:92192</name>
</gene>
<comment type="function">
    <text evidence="1">Plays a major role in tight junction-specific obliteration of the intercellular space.</text>
</comment>
<comment type="subcellular location">
    <subcellularLocation>
        <location evidence="1">Cell junction</location>
        <location evidence="1">Tight junction</location>
    </subcellularLocation>
    <subcellularLocation>
        <location evidence="1">Cell membrane</location>
        <topology evidence="1">Multi-pass membrane protein</topology>
    </subcellularLocation>
</comment>
<comment type="similarity">
    <text evidence="2">Belongs to the claudin family.</text>
</comment>
<accession>Q6DHP1</accession>
<proteinExistence type="evidence at transcript level"/>
<feature type="chain" id="PRO_0000397925" description="Claudin-7-A">
    <location>
        <begin position="1"/>
        <end position="212"/>
    </location>
</feature>
<feature type="topological domain" description="Cytoplasmic" evidence="2">
    <location>
        <begin position="1"/>
        <end position="7"/>
    </location>
</feature>
<feature type="transmembrane region" description="Helical" evidence="2">
    <location>
        <begin position="8"/>
        <end position="28"/>
    </location>
</feature>
<feature type="topological domain" description="Extracellular" evidence="2">
    <location>
        <begin position="29"/>
        <end position="81"/>
    </location>
</feature>
<feature type="transmembrane region" description="Helical" evidence="2">
    <location>
        <begin position="82"/>
        <end position="102"/>
    </location>
</feature>
<feature type="topological domain" description="Cytoplasmic" evidence="2">
    <location>
        <begin position="103"/>
        <end position="119"/>
    </location>
</feature>
<feature type="transmembrane region" description="Helical" evidence="2">
    <location>
        <begin position="120"/>
        <end position="140"/>
    </location>
</feature>
<feature type="topological domain" description="Extracellular" evidence="2">
    <location>
        <begin position="141"/>
        <end position="162"/>
    </location>
</feature>
<feature type="transmembrane region" description="Helical" evidence="2">
    <location>
        <begin position="163"/>
        <end position="183"/>
    </location>
</feature>
<feature type="topological domain" description="Cytoplasmic" evidence="2">
    <location>
        <begin position="184"/>
        <end position="212"/>
    </location>
</feature>
<feature type="region of interest" description="Disordered" evidence="3">
    <location>
        <begin position="191"/>
        <end position="212"/>
    </location>
</feature>
<keyword id="KW-0965">Cell junction</keyword>
<keyword id="KW-1003">Cell membrane</keyword>
<keyword id="KW-0472">Membrane</keyword>
<keyword id="KW-1185">Reference proteome</keyword>
<keyword id="KW-0796">Tight junction</keyword>
<keyword id="KW-0812">Transmembrane</keyword>
<keyword id="KW-1133">Transmembrane helix</keyword>
<reference evidence="4" key="1">
    <citation type="submission" date="2007-09" db="EMBL/GenBank/DDBJ databases">
        <authorList>
            <consortium name="NIH - Zebrafish Gene Collection (ZGC) project"/>
        </authorList>
    </citation>
    <scope>NUCLEOTIDE SEQUENCE [LARGE SCALE MRNA]</scope>
</reference>
<name>CLD7A_DANRE</name>
<sequence length="212" mass="22366">MANSGVQLLGFGLSLIGIIGLIVGTILPQWKMSAYVGDSIITAVATYQGLWMSCAFQSTGQLQCKIYDSILQLDSDLQATRALMIVGIIVSIAGLGVASIGMKCTTCGADDKVRKTRTAMTGGIILLVGALCAVVACSWFAHNVIRAFYNPFTPVNTKFEFGAAIFIAWGGSFLDVLGGAMLAASCPRSKQVSKYPKSNSTRSANGSNKEYV</sequence>
<dbReference type="EMBL" id="BC075926">
    <property type="protein sequence ID" value="AAH75926.1"/>
    <property type="molecule type" value="mRNA"/>
</dbReference>
<dbReference type="EMBL" id="BC153583">
    <property type="protein sequence ID" value="AAI53584.1"/>
    <property type="molecule type" value="mRNA"/>
</dbReference>
<dbReference type="RefSeq" id="NP_001002340.1">
    <property type="nucleotide sequence ID" value="NM_001002340.1"/>
</dbReference>
<dbReference type="SMR" id="Q6DHP1"/>
<dbReference type="FunCoup" id="Q6DHP1">
    <property type="interactions" value="1592"/>
</dbReference>
<dbReference type="STRING" id="7955.ENSDARP00000052843"/>
<dbReference type="PaxDb" id="7955-ENSDARP00000052843"/>
<dbReference type="Ensembl" id="ENSDART00000052844">
    <property type="protein sequence ID" value="ENSDARP00000052843"/>
    <property type="gene ID" value="ENSDARG00000036376"/>
</dbReference>
<dbReference type="Ensembl" id="ENSDART00000190401">
    <property type="protein sequence ID" value="ENSDARP00000155926"/>
    <property type="gene ID" value="ENSDARG00000111721"/>
</dbReference>
<dbReference type="Ensembl" id="ENSDART00000192390">
    <property type="protein sequence ID" value="ENSDARP00000153652"/>
    <property type="gene ID" value="ENSDARG00000115826"/>
</dbReference>
<dbReference type="GeneID" id="436612"/>
<dbReference type="KEGG" id="dre:436612"/>
<dbReference type="AGR" id="ZFIN:ZDB-GENE-040718-29"/>
<dbReference type="CTD" id="436612"/>
<dbReference type="ZFIN" id="ZDB-GENE-040718-29">
    <property type="gene designation" value="cldn7a"/>
</dbReference>
<dbReference type="eggNOG" id="ENOG502QPXX">
    <property type="taxonomic scope" value="Eukaryota"/>
</dbReference>
<dbReference type="HOGENOM" id="CLU_076370_2_3_1"/>
<dbReference type="InParanoid" id="Q6DHP1"/>
<dbReference type="OMA" id="TIFREWK"/>
<dbReference type="OrthoDB" id="10025519at2759"/>
<dbReference type="PhylomeDB" id="Q6DHP1"/>
<dbReference type="TreeFam" id="TF331936"/>
<dbReference type="PRO" id="PR:Q6DHP1"/>
<dbReference type="Proteomes" id="UP000000437">
    <property type="component" value="Alternate scaffold 7"/>
</dbReference>
<dbReference type="Proteomes" id="UP000000437">
    <property type="component" value="Chromosome 7"/>
</dbReference>
<dbReference type="Bgee" id="ENSDARG00000036376">
    <property type="expression patterns" value="Expressed in zone of skin and 14 other cell types or tissues"/>
</dbReference>
<dbReference type="GO" id="GO:0005923">
    <property type="term" value="C:bicellular tight junction"/>
    <property type="evidence" value="ECO:0000318"/>
    <property type="project" value="GO_Central"/>
</dbReference>
<dbReference type="GO" id="GO:0005886">
    <property type="term" value="C:plasma membrane"/>
    <property type="evidence" value="ECO:0000318"/>
    <property type="project" value="GO_Central"/>
</dbReference>
<dbReference type="GO" id="GO:0005198">
    <property type="term" value="F:structural molecule activity"/>
    <property type="evidence" value="ECO:0007669"/>
    <property type="project" value="InterPro"/>
</dbReference>
<dbReference type="GO" id="GO:0070830">
    <property type="term" value="P:bicellular tight junction assembly"/>
    <property type="evidence" value="ECO:0000318"/>
    <property type="project" value="GO_Central"/>
</dbReference>
<dbReference type="GO" id="GO:0007155">
    <property type="term" value="P:cell adhesion"/>
    <property type="evidence" value="ECO:0000318"/>
    <property type="project" value="GO_Central"/>
</dbReference>
<dbReference type="GO" id="GO:0060322">
    <property type="term" value="P:head development"/>
    <property type="evidence" value="ECO:0000315"/>
    <property type="project" value="ZFIN"/>
</dbReference>
<dbReference type="FunFam" id="1.20.140.150:FF:000001">
    <property type="entry name" value="Claudin"/>
    <property type="match status" value="1"/>
</dbReference>
<dbReference type="Gene3D" id="1.20.140.150">
    <property type="match status" value="1"/>
</dbReference>
<dbReference type="InterPro" id="IPR006187">
    <property type="entry name" value="Claudin"/>
</dbReference>
<dbReference type="InterPro" id="IPR017974">
    <property type="entry name" value="Claudin_CS"/>
</dbReference>
<dbReference type="InterPro" id="IPR004031">
    <property type="entry name" value="PMP22/EMP/MP20/Claudin"/>
</dbReference>
<dbReference type="PANTHER" id="PTHR12002">
    <property type="entry name" value="CLAUDIN"/>
    <property type="match status" value="1"/>
</dbReference>
<dbReference type="Pfam" id="PF00822">
    <property type="entry name" value="PMP22_Claudin"/>
    <property type="match status" value="1"/>
</dbReference>
<dbReference type="PRINTS" id="PR01077">
    <property type="entry name" value="CLAUDIN"/>
</dbReference>
<dbReference type="PRINTS" id="PR01385">
    <property type="entry name" value="CLAUDIN14"/>
</dbReference>
<dbReference type="PROSITE" id="PS01346">
    <property type="entry name" value="CLAUDIN"/>
    <property type="match status" value="1"/>
</dbReference>
<protein>
    <recommendedName>
        <fullName evidence="5">Claudin-7-A</fullName>
    </recommendedName>
</protein>
<organism>
    <name type="scientific">Danio rerio</name>
    <name type="common">Zebrafish</name>
    <name type="synonym">Brachydanio rerio</name>
    <dbReference type="NCBI Taxonomy" id="7955"/>
    <lineage>
        <taxon>Eukaryota</taxon>
        <taxon>Metazoa</taxon>
        <taxon>Chordata</taxon>
        <taxon>Craniata</taxon>
        <taxon>Vertebrata</taxon>
        <taxon>Euteleostomi</taxon>
        <taxon>Actinopterygii</taxon>
        <taxon>Neopterygii</taxon>
        <taxon>Teleostei</taxon>
        <taxon>Ostariophysi</taxon>
        <taxon>Cypriniformes</taxon>
        <taxon>Danionidae</taxon>
        <taxon>Danioninae</taxon>
        <taxon>Danio</taxon>
    </lineage>
</organism>
<evidence type="ECO:0000250" key="1">
    <source>
        <dbReference type="UniProtKB" id="O95471"/>
    </source>
</evidence>
<evidence type="ECO:0000255" key="2"/>
<evidence type="ECO:0000256" key="3">
    <source>
        <dbReference type="SAM" id="MobiDB-lite"/>
    </source>
</evidence>
<evidence type="ECO:0000312" key="4">
    <source>
        <dbReference type="EMBL" id="AAH75926.1"/>
    </source>
</evidence>
<evidence type="ECO:0000312" key="5">
    <source>
        <dbReference type="ZFIN" id="ZDB-GENE-040718-29"/>
    </source>
</evidence>